<reference key="1">
    <citation type="journal article" date="1993" name="J. Bacteriol.">
        <title>Structural genes for thiamine biosynthetic enzymes (thiCEFGH) in Escherichia coli K-12.</title>
        <authorList>
            <person name="Vander Horn P.B."/>
            <person name="Backstrom A.D."/>
            <person name="Stewart V."/>
            <person name="Begley T.P."/>
        </authorList>
    </citation>
    <scope>NUCLEOTIDE SEQUENCE [GENOMIC DNA]</scope>
    <source>
        <strain>K12</strain>
    </source>
</reference>
<reference key="2">
    <citation type="journal article" date="1993" name="Nucleic Acids Res.">
        <title>Analysis of the Escherichia coli genome. IV. DNA sequence of the region from 89.2 to 92.8 minutes.</title>
        <authorList>
            <person name="Blattner F.R."/>
            <person name="Burland V.D."/>
            <person name="Plunkett G. III"/>
            <person name="Sofia H.J."/>
            <person name="Daniels D.L."/>
        </authorList>
    </citation>
    <scope>NUCLEOTIDE SEQUENCE [LARGE SCALE GENOMIC DNA]</scope>
    <source>
        <strain>K12 / MG1655 / ATCC 47076</strain>
    </source>
</reference>
<reference key="3">
    <citation type="journal article" date="1997" name="Science">
        <title>The complete genome sequence of Escherichia coli K-12.</title>
        <authorList>
            <person name="Blattner F.R."/>
            <person name="Plunkett G. III"/>
            <person name="Bloch C.A."/>
            <person name="Perna N.T."/>
            <person name="Burland V."/>
            <person name="Riley M."/>
            <person name="Collado-Vides J."/>
            <person name="Glasner J.D."/>
            <person name="Rode C.K."/>
            <person name="Mayhew G.F."/>
            <person name="Gregor J."/>
            <person name="Davis N.W."/>
            <person name="Kirkpatrick H.A."/>
            <person name="Goeden M.A."/>
            <person name="Rose D.J."/>
            <person name="Mau B."/>
            <person name="Shao Y."/>
        </authorList>
    </citation>
    <scope>NUCLEOTIDE SEQUENCE [LARGE SCALE GENOMIC DNA]</scope>
    <source>
        <strain>K12 / MG1655 / ATCC 47076</strain>
    </source>
</reference>
<reference key="4">
    <citation type="journal article" date="2006" name="Mol. Syst. Biol.">
        <title>Highly accurate genome sequences of Escherichia coli K-12 strains MG1655 and W3110.</title>
        <authorList>
            <person name="Hayashi K."/>
            <person name="Morooka N."/>
            <person name="Yamamoto Y."/>
            <person name="Fujita K."/>
            <person name="Isono K."/>
            <person name="Choi S."/>
            <person name="Ohtsubo E."/>
            <person name="Baba T."/>
            <person name="Wanner B.L."/>
            <person name="Mori H."/>
            <person name="Horiuchi T."/>
        </authorList>
    </citation>
    <scope>NUCLEOTIDE SEQUENCE [LARGE SCALE GENOMIC DNA]</scope>
    <source>
        <strain>K12 / W3110 / ATCC 27325 / DSM 5911</strain>
    </source>
</reference>
<reference key="5">
    <citation type="journal article" date="1995" name="J. Am. Chem. Soc.">
        <title>Biosynthesis of thiamin I: the function of the thiE gene product.</title>
        <authorList>
            <person name="Backstrom A.D."/>
            <person name="Austin R."/>
            <person name="McMordie S."/>
            <person name="Begley T.P."/>
        </authorList>
    </citation>
    <scope>FUNCTION</scope>
    <scope>CATALYTIC ACTIVITY</scope>
    <scope>KINETIC PARAMETERS</scope>
</reference>
<reference key="6">
    <citation type="journal article" date="1998" name="Protein Sci.">
        <title>Efficient sequence analysis of the six gene products (7-74 kDa) from the Escherichia coli thiamin biosynthetic operon by tandem high-resolution mass spectrometry.</title>
        <authorList>
            <person name="Kelleher N.L."/>
            <person name="Taylor S.V."/>
            <person name="Grannis D."/>
            <person name="Kinsland C."/>
            <person name="Chiu H.-J."/>
            <person name="Begley T.P."/>
            <person name="McLafferty F.W."/>
        </authorList>
    </citation>
    <scope>MASS SPECTROMETRY</scope>
</reference>
<reference key="7">
    <citation type="journal article" date="2004" name="J. Biol. Chem.">
        <title>A genetic screen for the identification of thiamin metabolic genes.</title>
        <authorList>
            <person name="Lawhorn B.G."/>
            <person name="Gerdes S.Y."/>
            <person name="Begley T.P."/>
        </authorList>
    </citation>
    <scope>FUNCTION IN THIAMINE METABOLISM</scope>
    <source>
        <strain>K12 / MG1655 / ATCC 47076</strain>
    </source>
</reference>
<keyword id="KW-0460">Magnesium</keyword>
<keyword id="KW-0479">Metal-binding</keyword>
<keyword id="KW-1185">Reference proteome</keyword>
<keyword id="KW-0784">Thiamine biosynthesis</keyword>
<keyword id="KW-0808">Transferase</keyword>
<name>THIE_ECOLI</name>
<sequence length="211" mass="23015">MYQPDFPPVPFRSGLYPVVDSVQWIERLLDAGVRTLQLRIKDRRDEEVEADVVAAIALGRRYNARLFINDYWRLAIKHQAYGVHLGQEDLQATDLNAIRAAGLRLGVSTHDDMEIDVALAARPSYIALGHVFPTQTKQMPSAPQGLEQLARHVERLADYPTVAIGGISLARAPAVIATGVGSIAVVSAITQAADWRLATAQLLEIAGVGDE</sequence>
<protein>
    <recommendedName>
        <fullName>Thiamine-phosphate synthase</fullName>
        <shortName>TP synthase</shortName>
        <shortName>TPS</shortName>
        <ecNumber evidence="4">2.5.1.3</ecNumber>
    </recommendedName>
    <alternativeName>
        <fullName>Thiamine-phosphate pyrophosphorylase</fullName>
        <shortName>TMP pyrophosphorylase</shortName>
        <shortName>TMP-PPase</shortName>
    </alternativeName>
</protein>
<organism>
    <name type="scientific">Escherichia coli (strain K12)</name>
    <dbReference type="NCBI Taxonomy" id="83333"/>
    <lineage>
        <taxon>Bacteria</taxon>
        <taxon>Pseudomonadati</taxon>
        <taxon>Pseudomonadota</taxon>
        <taxon>Gammaproteobacteria</taxon>
        <taxon>Enterobacterales</taxon>
        <taxon>Enterobacteriaceae</taxon>
        <taxon>Escherichia</taxon>
    </lineage>
</organism>
<proteinExistence type="evidence at protein level"/>
<dbReference type="EC" id="2.5.1.3" evidence="4"/>
<dbReference type="EMBL" id="M88701">
    <property type="protein sequence ID" value="AAB95617.1"/>
    <property type="molecule type" value="Genomic_DNA"/>
</dbReference>
<dbReference type="EMBL" id="U00006">
    <property type="protein sequence ID" value="AAC43091.1"/>
    <property type="molecule type" value="Genomic_DNA"/>
</dbReference>
<dbReference type="EMBL" id="U00096">
    <property type="protein sequence ID" value="AAC76967.1"/>
    <property type="molecule type" value="Genomic_DNA"/>
</dbReference>
<dbReference type="EMBL" id="AP009048">
    <property type="protein sequence ID" value="BAE77326.1"/>
    <property type="molecule type" value="Genomic_DNA"/>
</dbReference>
<dbReference type="PIR" id="S35118">
    <property type="entry name" value="S35118"/>
</dbReference>
<dbReference type="RefSeq" id="NP_418421.1">
    <property type="nucleotide sequence ID" value="NC_000913.3"/>
</dbReference>
<dbReference type="RefSeq" id="WP_000284615.1">
    <property type="nucleotide sequence ID" value="NZ_SSZK01000047.1"/>
</dbReference>
<dbReference type="SMR" id="P30137"/>
<dbReference type="BioGRID" id="4259333">
    <property type="interactions" value="22"/>
</dbReference>
<dbReference type="DIP" id="DIP-10983N"/>
<dbReference type="FunCoup" id="P30137">
    <property type="interactions" value="658"/>
</dbReference>
<dbReference type="IntAct" id="P30137">
    <property type="interactions" value="4"/>
</dbReference>
<dbReference type="STRING" id="511145.b3993"/>
<dbReference type="PaxDb" id="511145-b3993"/>
<dbReference type="EnsemblBacteria" id="AAC76967">
    <property type="protein sequence ID" value="AAC76967"/>
    <property type="gene ID" value="b3993"/>
</dbReference>
<dbReference type="GeneID" id="75205511"/>
<dbReference type="GeneID" id="948491"/>
<dbReference type="KEGG" id="ecj:JW3957"/>
<dbReference type="KEGG" id="eco:b3993"/>
<dbReference type="KEGG" id="ecoc:C3026_21570"/>
<dbReference type="PATRIC" id="fig|1411691.4.peg.2718"/>
<dbReference type="EchoBASE" id="EB1545"/>
<dbReference type="eggNOG" id="COG0352">
    <property type="taxonomic scope" value="Bacteria"/>
</dbReference>
<dbReference type="HOGENOM" id="CLU_018272_3_3_6"/>
<dbReference type="InParanoid" id="P30137"/>
<dbReference type="OMA" id="QDFYHIK"/>
<dbReference type="PhylomeDB" id="P30137"/>
<dbReference type="BioCyc" id="EcoCyc:THIE-MONOMER"/>
<dbReference type="BioCyc" id="MetaCyc:THIE-MONOMER"/>
<dbReference type="SABIO-RK" id="P30137"/>
<dbReference type="UniPathway" id="UPA00060">
    <property type="reaction ID" value="UER00141"/>
</dbReference>
<dbReference type="PRO" id="PR:P30137"/>
<dbReference type="Proteomes" id="UP000000625">
    <property type="component" value="Chromosome"/>
</dbReference>
<dbReference type="GO" id="GO:0005737">
    <property type="term" value="C:cytoplasm"/>
    <property type="evidence" value="ECO:0000318"/>
    <property type="project" value="GO_Central"/>
</dbReference>
<dbReference type="GO" id="GO:0000287">
    <property type="term" value="F:magnesium ion binding"/>
    <property type="evidence" value="ECO:0000314"/>
    <property type="project" value="EcoCyc"/>
</dbReference>
<dbReference type="GO" id="GO:0046872">
    <property type="term" value="F:metal ion binding"/>
    <property type="evidence" value="ECO:0000314"/>
    <property type="project" value="EcoCyc"/>
</dbReference>
<dbReference type="GO" id="GO:0004789">
    <property type="term" value="F:thiamine-phosphate diphosphorylase activity"/>
    <property type="evidence" value="ECO:0000318"/>
    <property type="project" value="GO_Central"/>
</dbReference>
<dbReference type="GO" id="GO:0009228">
    <property type="term" value="P:thiamine biosynthetic process"/>
    <property type="evidence" value="ECO:0000314"/>
    <property type="project" value="EcoCyc"/>
</dbReference>
<dbReference type="GO" id="GO:0009229">
    <property type="term" value="P:thiamine diphosphate biosynthetic process"/>
    <property type="evidence" value="ECO:0007669"/>
    <property type="project" value="UniProtKB-UniRule"/>
</dbReference>
<dbReference type="CDD" id="cd00564">
    <property type="entry name" value="TMP_TenI"/>
    <property type="match status" value="1"/>
</dbReference>
<dbReference type="FunFam" id="3.20.20.70:FF:000064">
    <property type="entry name" value="Thiamine-phosphate synthase"/>
    <property type="match status" value="1"/>
</dbReference>
<dbReference type="Gene3D" id="3.20.20.70">
    <property type="entry name" value="Aldolase class I"/>
    <property type="match status" value="1"/>
</dbReference>
<dbReference type="HAMAP" id="MF_00097">
    <property type="entry name" value="TMP_synthase"/>
    <property type="match status" value="1"/>
</dbReference>
<dbReference type="InterPro" id="IPR013785">
    <property type="entry name" value="Aldolase_TIM"/>
</dbReference>
<dbReference type="InterPro" id="IPR036206">
    <property type="entry name" value="ThiamineP_synth_sf"/>
</dbReference>
<dbReference type="InterPro" id="IPR022998">
    <property type="entry name" value="ThiamineP_synth_TenI"/>
</dbReference>
<dbReference type="InterPro" id="IPR034291">
    <property type="entry name" value="TMP_synthase"/>
</dbReference>
<dbReference type="NCBIfam" id="NF002904">
    <property type="entry name" value="PRK03512.1"/>
    <property type="match status" value="1"/>
</dbReference>
<dbReference type="NCBIfam" id="TIGR00693">
    <property type="entry name" value="thiE"/>
    <property type="match status" value="1"/>
</dbReference>
<dbReference type="PANTHER" id="PTHR20857">
    <property type="entry name" value="THIAMINE-PHOSPHATE PYROPHOSPHORYLASE"/>
    <property type="match status" value="1"/>
</dbReference>
<dbReference type="PANTHER" id="PTHR20857:SF15">
    <property type="entry name" value="THIAMINE-PHOSPHATE SYNTHASE"/>
    <property type="match status" value="1"/>
</dbReference>
<dbReference type="Pfam" id="PF02581">
    <property type="entry name" value="TMP-TENI"/>
    <property type="match status" value="1"/>
</dbReference>
<dbReference type="SUPFAM" id="SSF51391">
    <property type="entry name" value="Thiamin phosphate synthase"/>
    <property type="match status" value="1"/>
</dbReference>
<feature type="chain" id="PRO_0000157010" description="Thiamine-phosphate synthase">
    <location>
        <begin position="1"/>
        <end position="211"/>
    </location>
</feature>
<feature type="binding site" evidence="1">
    <location>
        <begin position="37"/>
        <end position="41"/>
    </location>
    <ligand>
        <name>4-amino-2-methyl-5-(diphosphooxymethyl)pyrimidine</name>
        <dbReference type="ChEBI" id="CHEBI:57841"/>
    </ligand>
</feature>
<feature type="binding site" evidence="1">
    <location>
        <position position="69"/>
    </location>
    <ligand>
        <name>4-amino-2-methyl-5-(diphosphooxymethyl)pyrimidine</name>
        <dbReference type="ChEBI" id="CHEBI:57841"/>
    </ligand>
</feature>
<feature type="binding site" evidence="1">
    <location>
        <position position="70"/>
    </location>
    <ligand>
        <name>Mg(2+)</name>
        <dbReference type="ChEBI" id="CHEBI:18420"/>
    </ligand>
</feature>
<feature type="binding site" evidence="1">
    <location>
        <position position="89"/>
    </location>
    <ligand>
        <name>Mg(2+)</name>
        <dbReference type="ChEBI" id="CHEBI:18420"/>
    </ligand>
</feature>
<feature type="binding site" evidence="1">
    <location>
        <position position="108"/>
    </location>
    <ligand>
        <name>4-amino-2-methyl-5-(diphosphooxymethyl)pyrimidine</name>
        <dbReference type="ChEBI" id="CHEBI:57841"/>
    </ligand>
</feature>
<feature type="binding site" evidence="1">
    <location>
        <begin position="134"/>
        <end position="136"/>
    </location>
    <ligand>
        <name>2-[(2R,5Z)-2-carboxy-4-methylthiazol-5(2H)-ylidene]ethyl phosphate</name>
        <dbReference type="ChEBI" id="CHEBI:62899"/>
    </ligand>
</feature>
<feature type="binding site" evidence="1">
    <location>
        <position position="137"/>
    </location>
    <ligand>
        <name>4-amino-2-methyl-5-(diphosphooxymethyl)pyrimidine</name>
        <dbReference type="ChEBI" id="CHEBI:57841"/>
    </ligand>
</feature>
<feature type="binding site" evidence="1">
    <location>
        <position position="166"/>
    </location>
    <ligand>
        <name>2-[(2R,5Z)-2-carboxy-4-methylthiazol-5(2H)-ylidene]ethyl phosphate</name>
        <dbReference type="ChEBI" id="CHEBI:62899"/>
    </ligand>
</feature>
<feature type="binding site" evidence="1">
    <location>
        <begin position="186"/>
        <end position="187"/>
    </location>
    <ligand>
        <name>2-[(2R,5Z)-2-carboxy-4-methylthiazol-5(2H)-ylidene]ethyl phosphate</name>
        <dbReference type="ChEBI" id="CHEBI:62899"/>
    </ligand>
</feature>
<accession>P30137</accession>
<accession>Q2M8T0</accession>
<gene>
    <name type="primary">thiE</name>
    <name type="ordered locus">b3993</name>
    <name type="ordered locus">JW3957</name>
</gene>
<comment type="function">
    <text evidence="3 4">Condenses 4-methyl-5-(beta-hydroxyethyl)thiazole monophosphate (THZ-P) and 2-methyl-4-amino-5-hydroxymethyl pyrimidine pyrophosphate (HMP-PP) to form thiamine monophosphate (TMP).</text>
</comment>
<comment type="catalytic activity">
    <reaction evidence="4">
        <text>2-[(2R,5Z)-2-carboxy-4-methylthiazol-5(2H)-ylidene]ethyl phosphate + 4-amino-2-methyl-5-(diphosphooxymethyl)pyrimidine + 2 H(+) = thiamine phosphate + CO2 + diphosphate</text>
        <dbReference type="Rhea" id="RHEA:47844"/>
        <dbReference type="ChEBI" id="CHEBI:15378"/>
        <dbReference type="ChEBI" id="CHEBI:16526"/>
        <dbReference type="ChEBI" id="CHEBI:33019"/>
        <dbReference type="ChEBI" id="CHEBI:37575"/>
        <dbReference type="ChEBI" id="CHEBI:57841"/>
        <dbReference type="ChEBI" id="CHEBI:62899"/>
        <dbReference type="EC" id="2.5.1.3"/>
    </reaction>
</comment>
<comment type="catalytic activity">
    <reaction evidence="4">
        <text>2-(2-carboxy-4-methylthiazol-5-yl)ethyl phosphate + 4-amino-2-methyl-5-(diphosphooxymethyl)pyrimidine + 2 H(+) = thiamine phosphate + CO2 + diphosphate</text>
        <dbReference type="Rhea" id="RHEA:47848"/>
        <dbReference type="ChEBI" id="CHEBI:15378"/>
        <dbReference type="ChEBI" id="CHEBI:16526"/>
        <dbReference type="ChEBI" id="CHEBI:33019"/>
        <dbReference type="ChEBI" id="CHEBI:37575"/>
        <dbReference type="ChEBI" id="CHEBI:57841"/>
        <dbReference type="ChEBI" id="CHEBI:62890"/>
        <dbReference type="EC" id="2.5.1.3"/>
    </reaction>
</comment>
<comment type="catalytic activity">
    <reaction evidence="4">
        <text>4-methyl-5-(2-phosphooxyethyl)-thiazole + 4-amino-2-methyl-5-(diphosphooxymethyl)pyrimidine + H(+) = thiamine phosphate + diphosphate</text>
        <dbReference type="Rhea" id="RHEA:22328"/>
        <dbReference type="ChEBI" id="CHEBI:15378"/>
        <dbReference type="ChEBI" id="CHEBI:33019"/>
        <dbReference type="ChEBI" id="CHEBI:37575"/>
        <dbReference type="ChEBI" id="CHEBI:57841"/>
        <dbReference type="ChEBI" id="CHEBI:58296"/>
        <dbReference type="EC" id="2.5.1.3"/>
    </reaction>
</comment>
<comment type="cofactor">
    <cofactor evidence="1">
        <name>Mg(2+)</name>
        <dbReference type="ChEBI" id="CHEBI:18420"/>
    </cofactor>
    <text evidence="1">Binds 1 Mg(2+) ion per subunit.</text>
</comment>
<comment type="biophysicochemical properties">
    <kinetics>
        <KM evidence="4">1 uM for HMP-PP</KM>
        <KM evidence="4">2 uM for THZ-P</KM>
    </kinetics>
</comment>
<comment type="pathway">
    <text>Cofactor biosynthesis; thiamine diphosphate biosynthesis; thiamine phosphate from 4-amino-2-methyl-5-diphosphomethylpyrimidine and 4-methyl-5-(2-phosphoethyl)-thiazole: step 1/1.</text>
</comment>
<comment type="mass spectrometry" mass="23014.8" method="Electrospray" evidence="2"/>
<comment type="similarity">
    <text evidence="5">Belongs to the thiamine-phosphate synthase family.</text>
</comment>
<evidence type="ECO:0000250" key="1"/>
<evidence type="ECO:0000269" key="2">
    <source>
    </source>
</evidence>
<evidence type="ECO:0000269" key="3">
    <source>
    </source>
</evidence>
<evidence type="ECO:0000269" key="4">
    <source ref="5"/>
</evidence>
<evidence type="ECO:0000305" key="5"/>